<dbReference type="EMBL" id="CP000387">
    <property type="protein sequence ID" value="ABN43669.1"/>
    <property type="molecule type" value="Genomic_DNA"/>
</dbReference>
<dbReference type="RefSeq" id="WP_002918342.1">
    <property type="nucleotide sequence ID" value="NC_009009.1"/>
</dbReference>
<dbReference type="RefSeq" id="YP_001034219.1">
    <property type="nucleotide sequence ID" value="NC_009009.1"/>
</dbReference>
<dbReference type="SMR" id="A3CKG4"/>
<dbReference type="STRING" id="388919.SSA_0208"/>
<dbReference type="KEGG" id="ssa:SSA_0208"/>
<dbReference type="PATRIC" id="fig|388919.9.peg.203"/>
<dbReference type="eggNOG" id="COG4868">
    <property type="taxonomic scope" value="Bacteria"/>
</dbReference>
<dbReference type="HOGENOM" id="CLU_046981_0_0_9"/>
<dbReference type="OrthoDB" id="9803572at2"/>
<dbReference type="Proteomes" id="UP000002148">
    <property type="component" value="Chromosome"/>
</dbReference>
<dbReference type="Gene3D" id="1.20.1570.10">
    <property type="entry name" value="dip2346 domain like"/>
    <property type="match status" value="1"/>
</dbReference>
<dbReference type="Gene3D" id="3.10.630.10">
    <property type="entry name" value="dip2346 domain like"/>
    <property type="match status" value="1"/>
</dbReference>
<dbReference type="Gene3D" id="3.40.140.40">
    <property type="entry name" value="Domain of unknown function (DUF1846), C-terminal subdomain"/>
    <property type="match status" value="1"/>
</dbReference>
<dbReference type="HAMAP" id="MF_01567">
    <property type="entry name" value="UPF0371"/>
    <property type="match status" value="1"/>
</dbReference>
<dbReference type="InterPro" id="IPR014999">
    <property type="entry name" value="DUF1846"/>
</dbReference>
<dbReference type="InterPro" id="IPR048441">
    <property type="entry name" value="DUF1846_C"/>
</dbReference>
<dbReference type="InterPro" id="IPR048496">
    <property type="entry name" value="DUF1846_N"/>
</dbReference>
<dbReference type="NCBIfam" id="NF010184">
    <property type="entry name" value="PRK13663.1"/>
    <property type="match status" value="1"/>
</dbReference>
<dbReference type="Pfam" id="PF08903">
    <property type="entry name" value="DUF1846"/>
    <property type="match status" value="1"/>
</dbReference>
<dbReference type="Pfam" id="PF20921">
    <property type="entry name" value="DUF1846_C"/>
    <property type="match status" value="1"/>
</dbReference>
<dbReference type="PIRSF" id="PIRSF033132">
    <property type="entry name" value="DUF1846"/>
    <property type="match status" value="1"/>
</dbReference>
<feature type="chain" id="PRO_1000069099" description="UPF0371 protein SSA_0208">
    <location>
        <begin position="1"/>
        <end position="494"/>
    </location>
</feature>
<accession>A3CKG4</accession>
<name>Y208_STRSV</name>
<comment type="similarity">
    <text evidence="1">Belongs to the UPF0371 family.</text>
</comment>
<sequence length="494" mass="55372">MKKIAFDSEKYLNLQRDHILERINQFEGKLYMEFGGKMLEDFHAARVLPGYEPDNKIRLLKELKDQVEIVIAINANNIEHSKARGDLGISYDQEVLRLIDTFNELDIYVGSVVITQYSGQPAADLFRSQLEKNGIASYIHYPIKGYPTDMDHIISPEGMGKNDYIKTSRNLVVVTAPGPGSGKLATCLSNMYHDQINGIKSGYAKFETFPVWNLPLHHPVNLAYEAATADLDDVNMIDPFHLQTYGKTTVNYNRDIEIFPVLKRMLERILGKSPYASPTDMGVNMVGFAIVDNDAAIEASQQEIIRRYYQTILDFKAERVSESAVKKIELLMNDLGITPLDRKVTVVARDKAESTGEPALALELPNGEIVTGKTSELFGPTAAVLINAIKKLAHIAKETKLIEPEYVKPIQGLKINHLGSRNPRLHSNEILMALAITAMENQDAANAMQQLGNLKGSEAHSTVTLTDEDKNVLRKLGIHVTMDPVYQYDRLYRK</sequence>
<keyword id="KW-1185">Reference proteome</keyword>
<organism>
    <name type="scientific">Streptococcus sanguinis (strain SK36)</name>
    <dbReference type="NCBI Taxonomy" id="388919"/>
    <lineage>
        <taxon>Bacteria</taxon>
        <taxon>Bacillati</taxon>
        <taxon>Bacillota</taxon>
        <taxon>Bacilli</taxon>
        <taxon>Lactobacillales</taxon>
        <taxon>Streptococcaceae</taxon>
        <taxon>Streptococcus</taxon>
    </lineage>
</organism>
<gene>
    <name type="ordered locus">SSA_0208</name>
</gene>
<evidence type="ECO:0000255" key="1">
    <source>
        <dbReference type="HAMAP-Rule" id="MF_01567"/>
    </source>
</evidence>
<reference key="1">
    <citation type="journal article" date="2007" name="J. Bacteriol.">
        <title>Genome of the opportunistic pathogen Streptococcus sanguinis.</title>
        <authorList>
            <person name="Xu P."/>
            <person name="Alves J.M."/>
            <person name="Kitten T."/>
            <person name="Brown A."/>
            <person name="Chen Z."/>
            <person name="Ozaki L.S."/>
            <person name="Manque P."/>
            <person name="Ge X."/>
            <person name="Serrano M.G."/>
            <person name="Puiu D."/>
            <person name="Hendricks S."/>
            <person name="Wang Y."/>
            <person name="Chaplin M.D."/>
            <person name="Akan D."/>
            <person name="Paik S."/>
            <person name="Peterson D.L."/>
            <person name="Macrina F.L."/>
            <person name="Buck G.A."/>
        </authorList>
    </citation>
    <scope>NUCLEOTIDE SEQUENCE [LARGE SCALE GENOMIC DNA]</scope>
    <source>
        <strain>SK36</strain>
    </source>
</reference>
<protein>
    <recommendedName>
        <fullName evidence="1">UPF0371 protein SSA_0208</fullName>
    </recommendedName>
</protein>
<proteinExistence type="inferred from homology"/>